<proteinExistence type="inferred from homology"/>
<feature type="chain" id="PRO_1000061448" description="Serine-protein kinase RsbW">
    <location>
        <begin position="1"/>
        <end position="159"/>
    </location>
</feature>
<protein>
    <recommendedName>
        <fullName evidence="1">Serine-protein kinase RsbW</fullName>
        <ecNumber evidence="1">2.7.11.1</ecNumber>
    </recommendedName>
    <alternativeName>
        <fullName evidence="1">Anti-sigma-B factor</fullName>
    </alternativeName>
    <alternativeName>
        <fullName evidence="1">Sigma-B negative effector RsbW</fullName>
    </alternativeName>
</protein>
<organism>
    <name type="scientific">Staphylococcus aureus (strain Mu3 / ATCC 700698)</name>
    <dbReference type="NCBI Taxonomy" id="418127"/>
    <lineage>
        <taxon>Bacteria</taxon>
        <taxon>Bacillati</taxon>
        <taxon>Bacillota</taxon>
        <taxon>Bacilli</taxon>
        <taxon>Bacillales</taxon>
        <taxon>Staphylococcaceae</taxon>
        <taxon>Staphylococcus</taxon>
    </lineage>
</organism>
<reference key="1">
    <citation type="journal article" date="2008" name="Antimicrob. Agents Chemother.">
        <title>Mutated response regulator graR is responsible for phenotypic conversion of Staphylococcus aureus from heterogeneous vancomycin-intermediate resistance to vancomycin-intermediate resistance.</title>
        <authorList>
            <person name="Neoh H.-M."/>
            <person name="Cui L."/>
            <person name="Yuzawa H."/>
            <person name="Takeuchi F."/>
            <person name="Matsuo M."/>
            <person name="Hiramatsu K."/>
        </authorList>
    </citation>
    <scope>NUCLEOTIDE SEQUENCE [LARGE SCALE GENOMIC DNA]</scope>
    <source>
        <strain>Mu3 / ATCC 700698</strain>
    </source>
</reference>
<evidence type="ECO:0000255" key="1">
    <source>
        <dbReference type="HAMAP-Rule" id="MF_00638"/>
    </source>
</evidence>
<accession>A7X4P1</accession>
<comment type="function">
    <text evidence="1">Negative regulator of sigma-B activity. Phosphorylates and inactivates its specific antagonist protein, RsbV. Upon phosphorylation of RsbV, RsbW is released and binds to sigma-B, thereby blocking its ability to form an RNA polymerase holoenzyme (E-sigma-B).</text>
</comment>
<comment type="catalytic activity">
    <reaction evidence="1">
        <text>L-seryl-[protein] + ATP = O-phospho-L-seryl-[protein] + ADP + H(+)</text>
        <dbReference type="Rhea" id="RHEA:17989"/>
        <dbReference type="Rhea" id="RHEA-COMP:9863"/>
        <dbReference type="Rhea" id="RHEA-COMP:11604"/>
        <dbReference type="ChEBI" id="CHEBI:15378"/>
        <dbReference type="ChEBI" id="CHEBI:29999"/>
        <dbReference type="ChEBI" id="CHEBI:30616"/>
        <dbReference type="ChEBI" id="CHEBI:83421"/>
        <dbReference type="ChEBI" id="CHEBI:456216"/>
        <dbReference type="EC" id="2.7.11.1"/>
    </reaction>
</comment>
<comment type="catalytic activity">
    <reaction evidence="1">
        <text>L-threonyl-[protein] + ATP = O-phospho-L-threonyl-[protein] + ADP + H(+)</text>
        <dbReference type="Rhea" id="RHEA:46608"/>
        <dbReference type="Rhea" id="RHEA-COMP:11060"/>
        <dbReference type="Rhea" id="RHEA-COMP:11605"/>
        <dbReference type="ChEBI" id="CHEBI:15378"/>
        <dbReference type="ChEBI" id="CHEBI:30013"/>
        <dbReference type="ChEBI" id="CHEBI:30616"/>
        <dbReference type="ChEBI" id="CHEBI:61977"/>
        <dbReference type="ChEBI" id="CHEBI:456216"/>
        <dbReference type="EC" id="2.7.11.1"/>
    </reaction>
</comment>
<comment type="similarity">
    <text evidence="1">Belongs to the anti-sigma-factor family.</text>
</comment>
<keyword id="KW-0067">ATP-binding</keyword>
<keyword id="KW-0418">Kinase</keyword>
<keyword id="KW-0547">Nucleotide-binding</keyword>
<keyword id="KW-0723">Serine/threonine-protein kinase</keyword>
<keyword id="KW-0808">Transferase</keyword>
<gene>
    <name evidence="1" type="primary">rsbW</name>
    <name type="ordered locus">SAHV_2050</name>
</gene>
<dbReference type="EC" id="2.7.11.1" evidence="1"/>
<dbReference type="EMBL" id="AP009324">
    <property type="protein sequence ID" value="BAF78933.1"/>
    <property type="molecule type" value="Genomic_DNA"/>
</dbReference>
<dbReference type="RefSeq" id="WP_001190829.1">
    <property type="nucleotide sequence ID" value="NZ_CTYB01000037.1"/>
</dbReference>
<dbReference type="SMR" id="A7X4P1"/>
<dbReference type="KEGG" id="saw:SAHV_2050"/>
<dbReference type="HOGENOM" id="CLU_090336_11_1_9"/>
<dbReference type="GO" id="GO:0005524">
    <property type="term" value="F:ATP binding"/>
    <property type="evidence" value="ECO:0007669"/>
    <property type="project" value="UniProtKB-KW"/>
</dbReference>
<dbReference type="GO" id="GO:0106310">
    <property type="term" value="F:protein serine kinase activity"/>
    <property type="evidence" value="ECO:0007669"/>
    <property type="project" value="RHEA"/>
</dbReference>
<dbReference type="GO" id="GO:0004674">
    <property type="term" value="F:protein serine/threonine kinase activity"/>
    <property type="evidence" value="ECO:0007669"/>
    <property type="project" value="UniProtKB-KW"/>
</dbReference>
<dbReference type="GO" id="GO:0016989">
    <property type="term" value="F:sigma factor antagonist activity"/>
    <property type="evidence" value="ECO:0007669"/>
    <property type="project" value="InterPro"/>
</dbReference>
<dbReference type="CDD" id="cd16936">
    <property type="entry name" value="HATPase_RsbW-like"/>
    <property type="match status" value="1"/>
</dbReference>
<dbReference type="Gene3D" id="3.30.565.10">
    <property type="entry name" value="Histidine kinase-like ATPase, C-terminal domain"/>
    <property type="match status" value="1"/>
</dbReference>
<dbReference type="HAMAP" id="MF_00638">
    <property type="entry name" value="Anti_sigma_B"/>
    <property type="match status" value="1"/>
</dbReference>
<dbReference type="InterPro" id="IPR050267">
    <property type="entry name" value="Anti-sigma-factor_SerPK"/>
</dbReference>
<dbReference type="InterPro" id="IPR036890">
    <property type="entry name" value="HATPase_C_sf"/>
</dbReference>
<dbReference type="InterPro" id="IPR010193">
    <property type="entry name" value="RsbW"/>
</dbReference>
<dbReference type="NCBIfam" id="NF003144">
    <property type="entry name" value="PRK04069.1"/>
    <property type="match status" value="1"/>
</dbReference>
<dbReference type="NCBIfam" id="TIGR01924">
    <property type="entry name" value="rsbW_low_gc"/>
    <property type="match status" value="1"/>
</dbReference>
<dbReference type="PANTHER" id="PTHR35526">
    <property type="entry name" value="ANTI-SIGMA-F FACTOR RSBW-RELATED"/>
    <property type="match status" value="1"/>
</dbReference>
<dbReference type="PANTHER" id="PTHR35526:SF9">
    <property type="entry name" value="SERINE-PROTEIN KINASE RSBW"/>
    <property type="match status" value="1"/>
</dbReference>
<dbReference type="Pfam" id="PF13581">
    <property type="entry name" value="HATPase_c_2"/>
    <property type="match status" value="1"/>
</dbReference>
<dbReference type="SUPFAM" id="SSF55874">
    <property type="entry name" value="ATPase domain of HSP90 chaperone/DNA topoisomerase II/histidine kinase"/>
    <property type="match status" value="1"/>
</dbReference>
<sequence>MQSKEDFIEMRVPASAEYVSLIRLTLSGVFSRAGATYDDIEDAKIAVSEAVTNAVKHAYKENNNVGIINIYFEILEDKIKIVISDKGDSFDYETTKSKIGPYDKDENIDFLREGGLGLFLIESLMDEVTVYKESGVTISMTKYIKKEQVRNNGERVEIS</sequence>
<name>RSBW_STAA1</name>